<proteinExistence type="inferred from homology"/>
<protein>
    <recommendedName>
        <fullName evidence="3">Protein DETOXIFICATION 8</fullName>
        <shortName evidence="3">AtDTX8</shortName>
    </recommendedName>
    <alternativeName>
        <fullName evidence="4">Multidrug and toxic compound extrusion protein 8</fullName>
        <shortName evidence="4">MATE protein 8</shortName>
    </alternativeName>
</protein>
<comment type="subcellular location">
    <subcellularLocation>
        <location evidence="1">Membrane</location>
        <topology evidence="1">Multi-pass membrane protein</topology>
    </subcellularLocation>
</comment>
<comment type="similarity">
    <text evidence="4">Belongs to the multi antimicrobial extrusion (MATE) (TC 2.A.66.1) family.</text>
</comment>
<comment type="sequence caution" evidence="4">
    <conflict type="erroneous gene model prediction">
        <sequence resource="EMBL-CDS" id="AAG60068"/>
    </conflict>
</comment>
<sequence>MENGFSLVPKEEEEEEDYSNEKSEDQTSYYLSTEMMKKVSFMAAPMVAVAASQYLLQVISIVMAGHLDELSLSAVAIATSLTNVTGFSLIFGLAGALETLCGQAFGAGQFRNISAYTYGSMLCLLLVCFPISLLWVFMDKLLELFHQDPLISQLACRYSIWLIPALFGYSVLQSMTRFFQSQGLVLPLFLSSLGALFFHVPFSWLLVYKLRFGIVGAALSIGFSYWLNVGLLWAFMRDSALYRKNWNLRAQEIFLSMKQFITLAIPTAMMTCLEWWSFELLILMSGLLPNSKLETSVLSICLTMSSLHYVIVNAIGAAASTHVSNKLGAGNPKAARSAANSAIFLGMIDAAIVSISLYSYRRNWAYIFSNESEVADYVTQITPFLCLSIGVDSFLAVLSGVARGTGWQHIGAYANIGSYYLVGIPVGSILCFVVKLRGKGLWIGILVGSTLQTIVLALVTFFTNWEQEVAKARDRVIEMIPQEII</sequence>
<gene>
    <name evidence="3" type="primary">DTX8</name>
    <name evidence="5" type="ordered locus">At1g66780</name>
    <name evidence="6" type="ORF">F4N21_9</name>
</gene>
<reference key="1">
    <citation type="journal article" date="2000" name="Nature">
        <title>Sequence and analysis of chromosome 1 of the plant Arabidopsis thaliana.</title>
        <authorList>
            <person name="Theologis A."/>
            <person name="Ecker J.R."/>
            <person name="Palm C.J."/>
            <person name="Federspiel N.A."/>
            <person name="Kaul S."/>
            <person name="White O."/>
            <person name="Alonso J."/>
            <person name="Altafi H."/>
            <person name="Araujo R."/>
            <person name="Bowman C.L."/>
            <person name="Brooks S.Y."/>
            <person name="Buehler E."/>
            <person name="Chan A."/>
            <person name="Chao Q."/>
            <person name="Chen H."/>
            <person name="Cheuk R.F."/>
            <person name="Chin C.W."/>
            <person name="Chung M.K."/>
            <person name="Conn L."/>
            <person name="Conway A.B."/>
            <person name="Conway A.R."/>
            <person name="Creasy T.H."/>
            <person name="Dewar K."/>
            <person name="Dunn P."/>
            <person name="Etgu P."/>
            <person name="Feldblyum T.V."/>
            <person name="Feng J.-D."/>
            <person name="Fong B."/>
            <person name="Fujii C.Y."/>
            <person name="Gill J.E."/>
            <person name="Goldsmith A.D."/>
            <person name="Haas B."/>
            <person name="Hansen N.F."/>
            <person name="Hughes B."/>
            <person name="Huizar L."/>
            <person name="Hunter J.L."/>
            <person name="Jenkins J."/>
            <person name="Johnson-Hopson C."/>
            <person name="Khan S."/>
            <person name="Khaykin E."/>
            <person name="Kim C.J."/>
            <person name="Koo H.L."/>
            <person name="Kremenetskaia I."/>
            <person name="Kurtz D.B."/>
            <person name="Kwan A."/>
            <person name="Lam B."/>
            <person name="Langin-Hooper S."/>
            <person name="Lee A."/>
            <person name="Lee J.M."/>
            <person name="Lenz C.A."/>
            <person name="Li J.H."/>
            <person name="Li Y.-P."/>
            <person name="Lin X."/>
            <person name="Liu S.X."/>
            <person name="Liu Z.A."/>
            <person name="Luros J.S."/>
            <person name="Maiti R."/>
            <person name="Marziali A."/>
            <person name="Militscher J."/>
            <person name="Miranda M."/>
            <person name="Nguyen M."/>
            <person name="Nierman W.C."/>
            <person name="Osborne B.I."/>
            <person name="Pai G."/>
            <person name="Peterson J."/>
            <person name="Pham P.K."/>
            <person name="Rizzo M."/>
            <person name="Rooney T."/>
            <person name="Rowley D."/>
            <person name="Sakano H."/>
            <person name="Salzberg S.L."/>
            <person name="Schwartz J.R."/>
            <person name="Shinn P."/>
            <person name="Southwick A.M."/>
            <person name="Sun H."/>
            <person name="Tallon L.J."/>
            <person name="Tambunga G."/>
            <person name="Toriumi M.J."/>
            <person name="Town C.D."/>
            <person name="Utterback T."/>
            <person name="Van Aken S."/>
            <person name="Vaysberg M."/>
            <person name="Vysotskaia V.S."/>
            <person name="Walker M."/>
            <person name="Wu D."/>
            <person name="Yu G."/>
            <person name="Fraser C.M."/>
            <person name="Venter J.C."/>
            <person name="Davis R.W."/>
        </authorList>
    </citation>
    <scope>NUCLEOTIDE SEQUENCE [LARGE SCALE GENOMIC DNA]</scope>
    <source>
        <strain>cv. Columbia</strain>
    </source>
</reference>
<reference key="2">
    <citation type="journal article" date="2017" name="Plant J.">
        <title>Araport11: a complete reannotation of the Arabidopsis thaliana reference genome.</title>
        <authorList>
            <person name="Cheng C.Y."/>
            <person name="Krishnakumar V."/>
            <person name="Chan A.P."/>
            <person name="Thibaud-Nissen F."/>
            <person name="Schobel S."/>
            <person name="Town C.D."/>
        </authorList>
    </citation>
    <scope>GENOME REANNOTATION</scope>
    <source>
        <strain>cv. Columbia</strain>
    </source>
</reference>
<reference key="3">
    <citation type="journal article" date="2002" name="J. Biol. Chem.">
        <title>Functional cloning and characterization of a plant efflux carrier for multidrug and heavy metal detoxification.</title>
        <authorList>
            <person name="Li L."/>
            <person name="He Z."/>
            <person name="Pandey G.K."/>
            <person name="Tsuchiya T."/>
            <person name="Luan S."/>
        </authorList>
    </citation>
    <scope>GENE FAMILY</scope>
    <scope>NOMENCLATURE</scope>
</reference>
<reference key="4">
    <citation type="journal article" date="2003" name="Eur. J. Biochem.">
        <title>The multidrug/oligosaccharidyl-lipid/polysaccharide (MOP) exporter superfamily.</title>
        <authorList>
            <person name="Hvorup R.N."/>
            <person name="Winnen B."/>
            <person name="Chang A.B."/>
            <person name="Jiang Y."/>
            <person name="Zhou X.F."/>
            <person name="Saier M.H. Jr."/>
        </authorList>
    </citation>
    <scope>GENE FAMILY</scope>
</reference>
<organism>
    <name type="scientific">Arabidopsis thaliana</name>
    <name type="common">Mouse-ear cress</name>
    <dbReference type="NCBI Taxonomy" id="3702"/>
    <lineage>
        <taxon>Eukaryota</taxon>
        <taxon>Viridiplantae</taxon>
        <taxon>Streptophyta</taxon>
        <taxon>Embryophyta</taxon>
        <taxon>Tracheophyta</taxon>
        <taxon>Spermatophyta</taxon>
        <taxon>Magnoliopsida</taxon>
        <taxon>eudicotyledons</taxon>
        <taxon>Gunneridae</taxon>
        <taxon>Pentapetalae</taxon>
        <taxon>rosids</taxon>
        <taxon>malvids</taxon>
        <taxon>Brassicales</taxon>
        <taxon>Brassicaceae</taxon>
        <taxon>Camelineae</taxon>
        <taxon>Arabidopsis</taxon>
    </lineage>
</organism>
<evidence type="ECO:0000255" key="1"/>
<evidence type="ECO:0000256" key="2">
    <source>
        <dbReference type="SAM" id="MobiDB-lite"/>
    </source>
</evidence>
<evidence type="ECO:0000303" key="3">
    <source>
    </source>
</evidence>
<evidence type="ECO:0000305" key="4"/>
<evidence type="ECO:0000312" key="5">
    <source>
        <dbReference type="Araport" id="AT1G66780"/>
    </source>
</evidence>
<evidence type="ECO:0000312" key="6">
    <source>
        <dbReference type="EMBL" id="AAG60068.1"/>
    </source>
</evidence>
<name>DTX8_ARATH</name>
<accession>F4HQ05</accession>
<accession>Q9C9N0</accession>
<keyword id="KW-0472">Membrane</keyword>
<keyword id="KW-1185">Reference proteome</keyword>
<keyword id="KW-0812">Transmembrane</keyword>
<keyword id="KW-1133">Transmembrane helix</keyword>
<keyword id="KW-0813">Transport</keyword>
<feature type="chain" id="PRO_0000434051" description="Protein DETOXIFICATION 8">
    <location>
        <begin position="1"/>
        <end position="485"/>
    </location>
</feature>
<feature type="transmembrane region" description="Helical" evidence="1">
    <location>
        <begin position="41"/>
        <end position="61"/>
    </location>
</feature>
<feature type="transmembrane region" description="Helical" evidence="1">
    <location>
        <begin position="74"/>
        <end position="94"/>
    </location>
</feature>
<feature type="transmembrane region" description="Helical" evidence="1">
    <location>
        <begin position="118"/>
        <end position="138"/>
    </location>
</feature>
<feature type="transmembrane region" description="Helical" evidence="1">
    <location>
        <begin position="159"/>
        <end position="179"/>
    </location>
</feature>
<feature type="transmembrane region" description="Helical" evidence="1">
    <location>
        <begin position="188"/>
        <end position="208"/>
    </location>
</feature>
<feature type="transmembrane region" description="Helical" evidence="1">
    <location>
        <begin position="212"/>
        <end position="232"/>
    </location>
</feature>
<feature type="transmembrane region" description="Helical" evidence="1">
    <location>
        <begin position="263"/>
        <end position="283"/>
    </location>
</feature>
<feature type="transmembrane region" description="Helical" evidence="1">
    <location>
        <begin position="297"/>
        <end position="317"/>
    </location>
</feature>
<feature type="transmembrane region" description="Helical" evidence="1">
    <location>
        <begin position="338"/>
        <end position="358"/>
    </location>
</feature>
<feature type="transmembrane region" description="Helical" evidence="1">
    <location>
        <begin position="381"/>
        <end position="401"/>
    </location>
</feature>
<feature type="transmembrane region" description="Helical" evidence="1">
    <location>
        <begin position="414"/>
        <end position="434"/>
    </location>
</feature>
<feature type="transmembrane region" description="Helical" evidence="1">
    <location>
        <begin position="442"/>
        <end position="462"/>
    </location>
</feature>
<feature type="region of interest" description="Disordered" evidence="2">
    <location>
        <begin position="1"/>
        <end position="26"/>
    </location>
</feature>
<dbReference type="EMBL" id="AC013288">
    <property type="protein sequence ID" value="AAG60068.1"/>
    <property type="status" value="ALT_SEQ"/>
    <property type="molecule type" value="Genomic_DNA"/>
</dbReference>
<dbReference type="EMBL" id="CP002684">
    <property type="protein sequence ID" value="AEE34555.1"/>
    <property type="molecule type" value="Genomic_DNA"/>
</dbReference>
<dbReference type="RefSeq" id="NP_176850.2">
    <property type="nucleotide sequence ID" value="NM_105349.3"/>
</dbReference>
<dbReference type="SMR" id="F4HQ05"/>
<dbReference type="FunCoup" id="F4HQ05">
    <property type="interactions" value="276"/>
</dbReference>
<dbReference type="STRING" id="3702.F4HQ05"/>
<dbReference type="PaxDb" id="3702-AT1G66780.1"/>
<dbReference type="EnsemblPlants" id="AT1G66780.1">
    <property type="protein sequence ID" value="AT1G66780.1"/>
    <property type="gene ID" value="AT1G66780"/>
</dbReference>
<dbReference type="GeneID" id="842996"/>
<dbReference type="Gramene" id="AT1G66780.1">
    <property type="protein sequence ID" value="AT1G66780.1"/>
    <property type="gene ID" value="AT1G66780"/>
</dbReference>
<dbReference type="KEGG" id="ath:AT1G66780"/>
<dbReference type="Araport" id="AT1G66780"/>
<dbReference type="TAIR" id="AT1G66780"/>
<dbReference type="eggNOG" id="KOG1347">
    <property type="taxonomic scope" value="Eukaryota"/>
</dbReference>
<dbReference type="HOGENOM" id="CLU_012893_1_0_1"/>
<dbReference type="InParanoid" id="F4HQ05"/>
<dbReference type="OMA" id="CAYYIAG"/>
<dbReference type="PRO" id="PR:F4HQ05"/>
<dbReference type="Proteomes" id="UP000006548">
    <property type="component" value="Chromosome 1"/>
</dbReference>
<dbReference type="ExpressionAtlas" id="F4HQ05">
    <property type="expression patterns" value="baseline and differential"/>
</dbReference>
<dbReference type="GO" id="GO:0016020">
    <property type="term" value="C:membrane"/>
    <property type="evidence" value="ECO:0007669"/>
    <property type="project" value="UniProtKB-SubCell"/>
</dbReference>
<dbReference type="GO" id="GO:0015297">
    <property type="term" value="F:antiporter activity"/>
    <property type="evidence" value="ECO:0007669"/>
    <property type="project" value="InterPro"/>
</dbReference>
<dbReference type="GO" id="GO:0042910">
    <property type="term" value="F:xenobiotic transmembrane transporter activity"/>
    <property type="evidence" value="ECO:0007669"/>
    <property type="project" value="InterPro"/>
</dbReference>
<dbReference type="GO" id="GO:1990961">
    <property type="term" value="P:xenobiotic detoxification by transmembrane export across the plasma membrane"/>
    <property type="evidence" value="ECO:0007669"/>
    <property type="project" value="InterPro"/>
</dbReference>
<dbReference type="CDD" id="cd13132">
    <property type="entry name" value="MATE_eukaryotic"/>
    <property type="match status" value="1"/>
</dbReference>
<dbReference type="InterPro" id="IPR045069">
    <property type="entry name" value="MATE_euk"/>
</dbReference>
<dbReference type="InterPro" id="IPR002528">
    <property type="entry name" value="MATE_fam"/>
</dbReference>
<dbReference type="NCBIfam" id="TIGR00797">
    <property type="entry name" value="matE"/>
    <property type="match status" value="1"/>
</dbReference>
<dbReference type="PANTHER" id="PTHR11206">
    <property type="entry name" value="MULTIDRUG RESISTANCE PROTEIN"/>
    <property type="match status" value="1"/>
</dbReference>
<dbReference type="Pfam" id="PF01554">
    <property type="entry name" value="MatE"/>
    <property type="match status" value="2"/>
</dbReference>